<reference key="1">
    <citation type="journal article" date="2005" name="J. Bacteriol.">
        <title>Whole-genome sequencing of Staphylococcus haemolyticus uncovers the extreme plasticity of its genome and the evolution of human-colonizing staphylococcal species.</title>
        <authorList>
            <person name="Takeuchi F."/>
            <person name="Watanabe S."/>
            <person name="Baba T."/>
            <person name="Yuzawa H."/>
            <person name="Ito T."/>
            <person name="Morimoto Y."/>
            <person name="Kuroda M."/>
            <person name="Cui L."/>
            <person name="Takahashi M."/>
            <person name="Ankai A."/>
            <person name="Baba S."/>
            <person name="Fukui S."/>
            <person name="Lee J.C."/>
            <person name="Hiramatsu K."/>
        </authorList>
    </citation>
    <scope>NUCLEOTIDE SEQUENCE [LARGE SCALE GENOMIC DNA]</scope>
    <source>
        <strain>JCSC1435</strain>
    </source>
</reference>
<protein>
    <recommendedName>
        <fullName evidence="1">Dephospho-CoA kinase</fullName>
        <ecNumber evidence="1">2.7.1.24</ecNumber>
    </recommendedName>
    <alternativeName>
        <fullName evidence="1">Dephosphocoenzyme A kinase</fullName>
    </alternativeName>
</protein>
<comment type="function">
    <text evidence="1">Catalyzes the phosphorylation of the 3'-hydroxyl group of dephosphocoenzyme A to form coenzyme A.</text>
</comment>
<comment type="catalytic activity">
    <reaction evidence="1">
        <text>3'-dephospho-CoA + ATP = ADP + CoA + H(+)</text>
        <dbReference type="Rhea" id="RHEA:18245"/>
        <dbReference type="ChEBI" id="CHEBI:15378"/>
        <dbReference type="ChEBI" id="CHEBI:30616"/>
        <dbReference type="ChEBI" id="CHEBI:57287"/>
        <dbReference type="ChEBI" id="CHEBI:57328"/>
        <dbReference type="ChEBI" id="CHEBI:456216"/>
        <dbReference type="EC" id="2.7.1.24"/>
    </reaction>
</comment>
<comment type="pathway">
    <text evidence="1">Cofactor biosynthesis; coenzyme A biosynthesis; CoA from (R)-pantothenate: step 5/5.</text>
</comment>
<comment type="subcellular location">
    <subcellularLocation>
        <location evidence="1">Cytoplasm</location>
    </subcellularLocation>
</comment>
<comment type="similarity">
    <text evidence="1">Belongs to the CoaE family.</text>
</comment>
<organism>
    <name type="scientific">Staphylococcus haemolyticus (strain JCSC1435)</name>
    <dbReference type="NCBI Taxonomy" id="279808"/>
    <lineage>
        <taxon>Bacteria</taxon>
        <taxon>Bacillati</taxon>
        <taxon>Bacillota</taxon>
        <taxon>Bacilli</taxon>
        <taxon>Bacillales</taxon>
        <taxon>Staphylococcaceae</taxon>
        <taxon>Staphylococcus</taxon>
    </lineage>
</organism>
<keyword id="KW-0067">ATP-binding</keyword>
<keyword id="KW-0173">Coenzyme A biosynthesis</keyword>
<keyword id="KW-0963">Cytoplasm</keyword>
<keyword id="KW-0418">Kinase</keyword>
<keyword id="KW-0547">Nucleotide-binding</keyword>
<keyword id="KW-0808">Transferase</keyword>
<feature type="chain" id="PRO_0000173005" description="Dephospho-CoA kinase">
    <location>
        <begin position="1"/>
        <end position="202"/>
    </location>
</feature>
<feature type="domain" description="DPCK" evidence="1">
    <location>
        <begin position="4"/>
        <end position="202"/>
    </location>
</feature>
<feature type="binding site" evidence="1">
    <location>
        <begin position="12"/>
        <end position="17"/>
    </location>
    <ligand>
        <name>ATP</name>
        <dbReference type="ChEBI" id="CHEBI:30616"/>
    </ligand>
</feature>
<gene>
    <name evidence="1" type="primary">coaE</name>
    <name type="ordered locus">SH1236</name>
</gene>
<proteinExistence type="inferred from homology"/>
<evidence type="ECO:0000255" key="1">
    <source>
        <dbReference type="HAMAP-Rule" id="MF_00376"/>
    </source>
</evidence>
<dbReference type="EC" id="2.7.1.24" evidence="1"/>
<dbReference type="EMBL" id="AP006716">
    <property type="protein sequence ID" value="BAE04545.1"/>
    <property type="molecule type" value="Genomic_DNA"/>
</dbReference>
<dbReference type="RefSeq" id="WP_011275535.1">
    <property type="nucleotide sequence ID" value="NC_007168.1"/>
</dbReference>
<dbReference type="SMR" id="Q4L730"/>
<dbReference type="GeneID" id="93780646"/>
<dbReference type="KEGG" id="sha:SH1236"/>
<dbReference type="eggNOG" id="COG0237">
    <property type="taxonomic scope" value="Bacteria"/>
</dbReference>
<dbReference type="HOGENOM" id="CLU_057180_0_0_9"/>
<dbReference type="OrthoDB" id="9812943at2"/>
<dbReference type="UniPathway" id="UPA00241">
    <property type="reaction ID" value="UER00356"/>
</dbReference>
<dbReference type="Proteomes" id="UP000000543">
    <property type="component" value="Chromosome"/>
</dbReference>
<dbReference type="GO" id="GO:0005737">
    <property type="term" value="C:cytoplasm"/>
    <property type="evidence" value="ECO:0007669"/>
    <property type="project" value="UniProtKB-SubCell"/>
</dbReference>
<dbReference type="GO" id="GO:0005524">
    <property type="term" value="F:ATP binding"/>
    <property type="evidence" value="ECO:0007669"/>
    <property type="project" value="UniProtKB-UniRule"/>
</dbReference>
<dbReference type="GO" id="GO:0004140">
    <property type="term" value="F:dephospho-CoA kinase activity"/>
    <property type="evidence" value="ECO:0007669"/>
    <property type="project" value="UniProtKB-UniRule"/>
</dbReference>
<dbReference type="GO" id="GO:0015937">
    <property type="term" value="P:coenzyme A biosynthetic process"/>
    <property type="evidence" value="ECO:0007669"/>
    <property type="project" value="UniProtKB-UniRule"/>
</dbReference>
<dbReference type="CDD" id="cd02022">
    <property type="entry name" value="DPCK"/>
    <property type="match status" value="1"/>
</dbReference>
<dbReference type="FunFam" id="3.40.50.300:FF:000991">
    <property type="entry name" value="Dephospho-CoA kinase"/>
    <property type="match status" value="1"/>
</dbReference>
<dbReference type="Gene3D" id="3.40.50.300">
    <property type="entry name" value="P-loop containing nucleotide triphosphate hydrolases"/>
    <property type="match status" value="1"/>
</dbReference>
<dbReference type="HAMAP" id="MF_00376">
    <property type="entry name" value="Dephospho_CoA_kinase"/>
    <property type="match status" value="1"/>
</dbReference>
<dbReference type="InterPro" id="IPR001977">
    <property type="entry name" value="Depp_CoAkinase"/>
</dbReference>
<dbReference type="InterPro" id="IPR027417">
    <property type="entry name" value="P-loop_NTPase"/>
</dbReference>
<dbReference type="NCBIfam" id="TIGR00152">
    <property type="entry name" value="dephospho-CoA kinase"/>
    <property type="match status" value="1"/>
</dbReference>
<dbReference type="PANTHER" id="PTHR10695:SF46">
    <property type="entry name" value="BIFUNCTIONAL COENZYME A SYNTHASE-RELATED"/>
    <property type="match status" value="1"/>
</dbReference>
<dbReference type="PANTHER" id="PTHR10695">
    <property type="entry name" value="DEPHOSPHO-COA KINASE-RELATED"/>
    <property type="match status" value="1"/>
</dbReference>
<dbReference type="Pfam" id="PF01121">
    <property type="entry name" value="CoaE"/>
    <property type="match status" value="1"/>
</dbReference>
<dbReference type="SUPFAM" id="SSF52540">
    <property type="entry name" value="P-loop containing nucleoside triphosphate hydrolases"/>
    <property type="match status" value="1"/>
</dbReference>
<dbReference type="PROSITE" id="PS51219">
    <property type="entry name" value="DPCK"/>
    <property type="match status" value="1"/>
</dbReference>
<accession>Q4L730</accession>
<name>COAE_STAHJ</name>
<sequence>MPKVIGLTGGIATGKSTVSELLTAFGFKVVDADIAARKAVAKGTKGLEQVRAAFGDSAITEEGEMDRKYVGEIVFNHPEKRLELNDIVHPIVREIMEEEKQSYLNQGYDVIMDIPLLFENELQNTVDEVWLVYTSESIQIERLMERNQLSLEDAKARVYSQISIDKKSRMADHVIDNLGDKLELKQNLEQLLTDKGFINKER</sequence>